<comment type="function">
    <text evidence="1">Specifically methylates the guanine in position 1207 of 16S rRNA in the 30S particle.</text>
</comment>
<comment type="catalytic activity">
    <reaction evidence="1">
        <text>guanosine(1207) in 16S rRNA + S-adenosyl-L-methionine = N(2)-methylguanosine(1207) in 16S rRNA + S-adenosyl-L-homocysteine + H(+)</text>
        <dbReference type="Rhea" id="RHEA:42736"/>
        <dbReference type="Rhea" id="RHEA-COMP:10213"/>
        <dbReference type="Rhea" id="RHEA-COMP:10214"/>
        <dbReference type="ChEBI" id="CHEBI:15378"/>
        <dbReference type="ChEBI" id="CHEBI:57856"/>
        <dbReference type="ChEBI" id="CHEBI:59789"/>
        <dbReference type="ChEBI" id="CHEBI:74269"/>
        <dbReference type="ChEBI" id="CHEBI:74481"/>
        <dbReference type="EC" id="2.1.1.172"/>
    </reaction>
</comment>
<comment type="subunit">
    <text evidence="1">Monomer.</text>
</comment>
<comment type="subcellular location">
    <subcellularLocation>
        <location evidence="1">Cytoplasm</location>
    </subcellularLocation>
</comment>
<comment type="similarity">
    <text evidence="1">Belongs to the methyltransferase superfamily. RsmC family.</text>
</comment>
<reference key="1">
    <citation type="submission" date="2006-12" db="EMBL/GenBank/DDBJ databases">
        <title>Complete sequence of Shewanella sp. W3-18-1.</title>
        <authorList>
            <consortium name="US DOE Joint Genome Institute"/>
            <person name="Copeland A."/>
            <person name="Lucas S."/>
            <person name="Lapidus A."/>
            <person name="Barry K."/>
            <person name="Detter J.C."/>
            <person name="Glavina del Rio T."/>
            <person name="Hammon N."/>
            <person name="Israni S."/>
            <person name="Dalin E."/>
            <person name="Tice H."/>
            <person name="Pitluck S."/>
            <person name="Chain P."/>
            <person name="Malfatti S."/>
            <person name="Shin M."/>
            <person name="Vergez L."/>
            <person name="Schmutz J."/>
            <person name="Larimer F."/>
            <person name="Land M."/>
            <person name="Hauser L."/>
            <person name="Kyrpides N."/>
            <person name="Lykidis A."/>
            <person name="Tiedje J."/>
            <person name="Richardson P."/>
        </authorList>
    </citation>
    <scope>NUCLEOTIDE SEQUENCE [LARGE SCALE GENOMIC DNA]</scope>
    <source>
        <strain>W3-18-1</strain>
    </source>
</reference>
<feature type="chain" id="PRO_0000369782" description="Ribosomal RNA small subunit methyltransferase C">
    <location>
        <begin position="1"/>
        <end position="347"/>
    </location>
</feature>
<evidence type="ECO:0000255" key="1">
    <source>
        <dbReference type="HAMAP-Rule" id="MF_01862"/>
    </source>
</evidence>
<protein>
    <recommendedName>
        <fullName evidence="1">Ribosomal RNA small subunit methyltransferase C</fullName>
        <ecNumber evidence="1">2.1.1.172</ecNumber>
    </recommendedName>
    <alternativeName>
        <fullName evidence="1">16S rRNA m2G1207 methyltransferase</fullName>
    </alternativeName>
    <alternativeName>
        <fullName evidence="1">rRNA (guanine-N(2)-)-methyltransferase RsmC</fullName>
    </alternativeName>
</protein>
<keyword id="KW-0963">Cytoplasm</keyword>
<keyword id="KW-0489">Methyltransferase</keyword>
<keyword id="KW-0698">rRNA processing</keyword>
<keyword id="KW-0949">S-adenosyl-L-methionine</keyword>
<keyword id="KW-0808">Transferase</keyword>
<accession>A1RG35</accession>
<dbReference type="EC" id="2.1.1.172" evidence="1"/>
<dbReference type="EMBL" id="CP000503">
    <property type="protein sequence ID" value="ABM23630.1"/>
    <property type="molecule type" value="Genomic_DNA"/>
</dbReference>
<dbReference type="RefSeq" id="WP_011788158.1">
    <property type="nucleotide sequence ID" value="NC_008750.1"/>
</dbReference>
<dbReference type="SMR" id="A1RG35"/>
<dbReference type="KEGG" id="shw:Sputw3181_0779"/>
<dbReference type="HOGENOM" id="CLU_049581_0_1_6"/>
<dbReference type="Proteomes" id="UP000002597">
    <property type="component" value="Chromosome"/>
</dbReference>
<dbReference type="GO" id="GO:0005737">
    <property type="term" value="C:cytoplasm"/>
    <property type="evidence" value="ECO:0007669"/>
    <property type="project" value="UniProtKB-SubCell"/>
</dbReference>
<dbReference type="GO" id="GO:0052914">
    <property type="term" value="F:16S rRNA (guanine(1207)-N(2))-methyltransferase activity"/>
    <property type="evidence" value="ECO:0007669"/>
    <property type="project" value="UniProtKB-EC"/>
</dbReference>
<dbReference type="GO" id="GO:0003676">
    <property type="term" value="F:nucleic acid binding"/>
    <property type="evidence" value="ECO:0007669"/>
    <property type="project" value="InterPro"/>
</dbReference>
<dbReference type="CDD" id="cd02440">
    <property type="entry name" value="AdoMet_MTases"/>
    <property type="match status" value="1"/>
</dbReference>
<dbReference type="Gene3D" id="3.40.50.150">
    <property type="entry name" value="Vaccinia Virus protein VP39"/>
    <property type="match status" value="2"/>
</dbReference>
<dbReference type="HAMAP" id="MF_01862">
    <property type="entry name" value="16SrRNA_methyltr_C"/>
    <property type="match status" value="1"/>
</dbReference>
<dbReference type="InterPro" id="IPR002052">
    <property type="entry name" value="DNA_methylase_N6_adenine_CS"/>
</dbReference>
<dbReference type="InterPro" id="IPR013675">
    <property type="entry name" value="Mtase_sm_N"/>
</dbReference>
<dbReference type="InterPro" id="IPR023543">
    <property type="entry name" value="rRNA_ssu_MeTfrase_C"/>
</dbReference>
<dbReference type="InterPro" id="IPR046977">
    <property type="entry name" value="RsmC/RlmG"/>
</dbReference>
<dbReference type="InterPro" id="IPR029063">
    <property type="entry name" value="SAM-dependent_MTases_sf"/>
</dbReference>
<dbReference type="InterPro" id="IPR007848">
    <property type="entry name" value="Small_mtfrase_dom"/>
</dbReference>
<dbReference type="PANTHER" id="PTHR47816">
    <property type="entry name" value="RIBOSOMAL RNA SMALL SUBUNIT METHYLTRANSFERASE C"/>
    <property type="match status" value="1"/>
</dbReference>
<dbReference type="PANTHER" id="PTHR47816:SF4">
    <property type="entry name" value="RIBOSOMAL RNA SMALL SUBUNIT METHYLTRANSFERASE C"/>
    <property type="match status" value="1"/>
</dbReference>
<dbReference type="Pfam" id="PF05175">
    <property type="entry name" value="MTS"/>
    <property type="match status" value="1"/>
</dbReference>
<dbReference type="Pfam" id="PF08468">
    <property type="entry name" value="MTS_N"/>
    <property type="match status" value="1"/>
</dbReference>
<dbReference type="SUPFAM" id="SSF53335">
    <property type="entry name" value="S-adenosyl-L-methionine-dependent methyltransferases"/>
    <property type="match status" value="1"/>
</dbReference>
<proteinExistence type="inferred from homology"/>
<name>RSMC_SHESW</name>
<sequence length="347" mass="38055">MLTNPSQVIIRNQDSLNQHKVLVLNHEADLLPKALLDVAASVDALALDYHHYLHLVPHANSKLRCYFGHELPHQDPIKPEKYDTVIVYFPKAKPLAPYLFTLAANHLVPNGQLLVVGENKGGIKSLVKLLPEYFATGMKLDNARHCLLFGSNLEGRAPAMKLSDWVSQYQLSTPQGEISICNLVGVFSEKRLDQGTELLLSHLPTLSGRVLDFGCGAGVIAAALLKAQPHLSLECIDINAMALASCELTLAANGMTAKVYPSDGLAQTTGKFNGIISNPPFHDGLTSTTNIAKNFVTDSAKQLQHNGIWQIVANRHLPYSDIIAAEFGQLTVPAENNKYKLYYFQQQ</sequence>
<gene>
    <name evidence="1" type="primary">rsmC</name>
    <name type="ordered locus">Sputw3181_0779</name>
</gene>
<organism>
    <name type="scientific">Shewanella sp. (strain W3-18-1)</name>
    <dbReference type="NCBI Taxonomy" id="351745"/>
    <lineage>
        <taxon>Bacteria</taxon>
        <taxon>Pseudomonadati</taxon>
        <taxon>Pseudomonadota</taxon>
        <taxon>Gammaproteobacteria</taxon>
        <taxon>Alteromonadales</taxon>
        <taxon>Shewanellaceae</taxon>
        <taxon>Shewanella</taxon>
    </lineage>
</organism>